<proteinExistence type="inferred from homology"/>
<evidence type="ECO:0000255" key="1">
    <source>
        <dbReference type="HAMAP-Rule" id="MF_01398"/>
    </source>
</evidence>
<keyword id="KW-0066">ATP synthesis</keyword>
<keyword id="KW-0997">Cell inner membrane</keyword>
<keyword id="KW-1003">Cell membrane</keyword>
<keyword id="KW-0138">CF(0)</keyword>
<keyword id="KW-0375">Hydrogen ion transport</keyword>
<keyword id="KW-0406">Ion transport</keyword>
<keyword id="KW-0472">Membrane</keyword>
<keyword id="KW-1185">Reference proteome</keyword>
<keyword id="KW-0812">Transmembrane</keyword>
<keyword id="KW-1133">Transmembrane helix</keyword>
<keyword id="KW-0813">Transport</keyword>
<reference key="1">
    <citation type="journal article" date="2005" name="Nat. Biotechnol.">
        <title>Complete genome sequence of the acetic acid bacterium Gluconobacter oxydans.</title>
        <authorList>
            <person name="Prust C."/>
            <person name="Hoffmeister M."/>
            <person name="Liesegang H."/>
            <person name="Wiezer A."/>
            <person name="Fricke W.F."/>
            <person name="Ehrenreich A."/>
            <person name="Gottschalk G."/>
            <person name="Deppenmeier U."/>
        </authorList>
    </citation>
    <scope>NUCLEOTIDE SEQUENCE [LARGE SCALE GENOMIC DNA]</scope>
    <source>
        <strain>621H</strain>
    </source>
</reference>
<sequence>MFHDPRFWTALAFVLFFVIFGRKLWVAITGHLDARADSVRHDLDEAARLRREAEQMLEDANREREKTLAETQAMLARSEAEAAGLAERARKDAEAAAARYEKMAQDRIHAAERSAIREIQDRAAQIAVAAARDVVSTRLTESPDIAATLIDKGIDSLPEALRRSAA</sequence>
<accession>Q5FRW8</accession>
<organism>
    <name type="scientific">Gluconobacter oxydans (strain 621H)</name>
    <name type="common">Gluconobacter suboxydans</name>
    <dbReference type="NCBI Taxonomy" id="290633"/>
    <lineage>
        <taxon>Bacteria</taxon>
        <taxon>Pseudomonadati</taxon>
        <taxon>Pseudomonadota</taxon>
        <taxon>Alphaproteobacteria</taxon>
        <taxon>Acetobacterales</taxon>
        <taxon>Acetobacteraceae</taxon>
        <taxon>Gluconobacter</taxon>
    </lineage>
</organism>
<dbReference type="EMBL" id="CP000009">
    <property type="protein sequence ID" value="AAW60878.1"/>
    <property type="molecule type" value="Genomic_DNA"/>
</dbReference>
<dbReference type="RefSeq" id="WP_011252670.1">
    <property type="nucleotide sequence ID" value="NZ_LT900338.1"/>
</dbReference>
<dbReference type="SMR" id="Q5FRW8"/>
<dbReference type="STRING" id="290633.GOX1110"/>
<dbReference type="KEGG" id="gox:GOX1110"/>
<dbReference type="eggNOG" id="COG0711">
    <property type="taxonomic scope" value="Bacteria"/>
</dbReference>
<dbReference type="HOGENOM" id="CLU_079215_6_2_5"/>
<dbReference type="Proteomes" id="UP000006375">
    <property type="component" value="Chromosome"/>
</dbReference>
<dbReference type="GO" id="GO:0005886">
    <property type="term" value="C:plasma membrane"/>
    <property type="evidence" value="ECO:0007669"/>
    <property type="project" value="UniProtKB-SubCell"/>
</dbReference>
<dbReference type="GO" id="GO:0045259">
    <property type="term" value="C:proton-transporting ATP synthase complex"/>
    <property type="evidence" value="ECO:0007669"/>
    <property type="project" value="UniProtKB-KW"/>
</dbReference>
<dbReference type="GO" id="GO:0046933">
    <property type="term" value="F:proton-transporting ATP synthase activity, rotational mechanism"/>
    <property type="evidence" value="ECO:0007669"/>
    <property type="project" value="UniProtKB-UniRule"/>
</dbReference>
<dbReference type="GO" id="GO:0046961">
    <property type="term" value="F:proton-transporting ATPase activity, rotational mechanism"/>
    <property type="evidence" value="ECO:0007669"/>
    <property type="project" value="TreeGrafter"/>
</dbReference>
<dbReference type="CDD" id="cd06503">
    <property type="entry name" value="ATP-synt_Fo_b"/>
    <property type="match status" value="1"/>
</dbReference>
<dbReference type="HAMAP" id="MF_01398">
    <property type="entry name" value="ATP_synth_b_bprime"/>
    <property type="match status" value="1"/>
</dbReference>
<dbReference type="InterPro" id="IPR002146">
    <property type="entry name" value="ATP_synth_b/b'su_bac/chlpt"/>
</dbReference>
<dbReference type="InterPro" id="IPR050059">
    <property type="entry name" value="ATP_synthase_B_chain"/>
</dbReference>
<dbReference type="PANTHER" id="PTHR33445:SF1">
    <property type="entry name" value="ATP SYNTHASE SUBUNIT B"/>
    <property type="match status" value="1"/>
</dbReference>
<dbReference type="PANTHER" id="PTHR33445">
    <property type="entry name" value="ATP SYNTHASE SUBUNIT B', CHLOROPLASTIC"/>
    <property type="match status" value="1"/>
</dbReference>
<dbReference type="Pfam" id="PF00430">
    <property type="entry name" value="ATP-synt_B"/>
    <property type="match status" value="1"/>
</dbReference>
<protein>
    <recommendedName>
        <fullName evidence="1">ATP synthase subunit b 1</fullName>
    </recommendedName>
    <alternativeName>
        <fullName evidence="1">ATP synthase F(0) sector subunit b 1</fullName>
    </alternativeName>
    <alternativeName>
        <fullName evidence="1">ATPase subunit I 1</fullName>
    </alternativeName>
    <alternativeName>
        <fullName evidence="1">F-type ATPase subunit b 1</fullName>
        <shortName evidence="1">F-ATPase subunit b 1</shortName>
    </alternativeName>
</protein>
<comment type="function">
    <text evidence="1">F(1)F(0) ATP synthase produces ATP from ADP in the presence of a proton or sodium gradient. F-type ATPases consist of two structural domains, F(1) containing the extramembraneous catalytic core and F(0) containing the membrane proton channel, linked together by a central stalk and a peripheral stalk. During catalysis, ATP synthesis in the catalytic domain of F(1) is coupled via a rotary mechanism of the central stalk subunits to proton translocation.</text>
</comment>
<comment type="function">
    <text evidence="1">Component of the F(0) channel, it forms part of the peripheral stalk, linking F(1) to F(0).</text>
</comment>
<comment type="subunit">
    <text evidence="1">F-type ATPases have 2 components, F(1) - the catalytic core - and F(0) - the membrane proton channel. F(1) has five subunits: alpha(3), beta(3), gamma(1), delta(1), epsilon(1). F(0) has three main subunits: a(1), b(2) and c(10-14). The alpha and beta chains form an alternating ring which encloses part of the gamma chain. F(1) is attached to F(0) by a central stalk formed by the gamma and epsilon chains, while a peripheral stalk is formed by the delta and b chains.</text>
</comment>
<comment type="subcellular location">
    <subcellularLocation>
        <location evidence="1">Cell inner membrane</location>
        <topology evidence="1">Single-pass membrane protein</topology>
    </subcellularLocation>
</comment>
<comment type="similarity">
    <text evidence="1">Belongs to the ATPase B chain family.</text>
</comment>
<name>ATPF1_GLUOX</name>
<feature type="chain" id="PRO_0000368506" description="ATP synthase subunit b 1">
    <location>
        <begin position="1"/>
        <end position="166"/>
    </location>
</feature>
<feature type="transmembrane region" description="Helical" evidence="1">
    <location>
        <begin position="7"/>
        <end position="29"/>
    </location>
</feature>
<gene>
    <name evidence="1" type="primary">atpF1</name>
    <name type="ordered locus">GOX1110</name>
</gene>